<protein>
    <recommendedName>
        <fullName evidence="1">Orotidine 5'-phosphate decarboxylase</fullName>
        <ecNumber evidence="1">4.1.1.23</ecNumber>
    </recommendedName>
    <alternativeName>
        <fullName evidence="1">OMP decarboxylase</fullName>
        <shortName evidence="1">OMPDCase</shortName>
        <shortName evidence="1">OMPdecase</shortName>
    </alternativeName>
</protein>
<accession>Q3AZD9</accession>
<keyword id="KW-0210">Decarboxylase</keyword>
<keyword id="KW-0456">Lyase</keyword>
<keyword id="KW-0665">Pyrimidine biosynthesis</keyword>
<keyword id="KW-1185">Reference proteome</keyword>
<comment type="function">
    <text evidence="1">Catalyzes the decarboxylation of orotidine 5'-monophosphate (OMP) to uridine 5'-monophosphate (UMP).</text>
</comment>
<comment type="catalytic activity">
    <reaction evidence="1">
        <text>orotidine 5'-phosphate + H(+) = UMP + CO2</text>
        <dbReference type="Rhea" id="RHEA:11596"/>
        <dbReference type="ChEBI" id="CHEBI:15378"/>
        <dbReference type="ChEBI" id="CHEBI:16526"/>
        <dbReference type="ChEBI" id="CHEBI:57538"/>
        <dbReference type="ChEBI" id="CHEBI:57865"/>
        <dbReference type="EC" id="4.1.1.23"/>
    </reaction>
</comment>
<comment type="pathway">
    <text evidence="1">Pyrimidine metabolism; UMP biosynthesis via de novo pathway; UMP from orotate: step 2/2.</text>
</comment>
<comment type="subunit">
    <text evidence="1">Homodimer.</text>
</comment>
<comment type="similarity">
    <text evidence="1">Belongs to the OMP decarboxylase family. Type 1 subfamily.</text>
</comment>
<comment type="sequence caution" evidence="2">
    <conflict type="erroneous initiation">
        <sequence resource="EMBL-CDS" id="ABB25538"/>
    </conflict>
</comment>
<name>PYRF_SYNS9</name>
<gene>
    <name evidence="1" type="primary">pyrF</name>
    <name type="ordered locus">Syncc9902_0570</name>
</gene>
<organism>
    <name type="scientific">Synechococcus sp. (strain CC9902)</name>
    <dbReference type="NCBI Taxonomy" id="316279"/>
    <lineage>
        <taxon>Bacteria</taxon>
        <taxon>Bacillati</taxon>
        <taxon>Cyanobacteriota</taxon>
        <taxon>Cyanophyceae</taxon>
        <taxon>Synechococcales</taxon>
        <taxon>Synechococcaceae</taxon>
        <taxon>Synechococcus</taxon>
    </lineage>
</organism>
<dbReference type="EC" id="4.1.1.23" evidence="1"/>
<dbReference type="EMBL" id="CP000097">
    <property type="protein sequence ID" value="ABB25538.1"/>
    <property type="status" value="ALT_INIT"/>
    <property type="molecule type" value="Genomic_DNA"/>
</dbReference>
<dbReference type="SMR" id="Q3AZD9"/>
<dbReference type="STRING" id="316279.Syncc9902_0570"/>
<dbReference type="KEGG" id="sye:Syncc9902_0570"/>
<dbReference type="eggNOG" id="COG0284">
    <property type="taxonomic scope" value="Bacteria"/>
</dbReference>
<dbReference type="HOGENOM" id="CLU_067069_1_0_3"/>
<dbReference type="OrthoDB" id="9806203at2"/>
<dbReference type="UniPathway" id="UPA00070">
    <property type="reaction ID" value="UER00120"/>
</dbReference>
<dbReference type="Proteomes" id="UP000002712">
    <property type="component" value="Chromosome"/>
</dbReference>
<dbReference type="GO" id="GO:0005829">
    <property type="term" value="C:cytosol"/>
    <property type="evidence" value="ECO:0007669"/>
    <property type="project" value="TreeGrafter"/>
</dbReference>
<dbReference type="GO" id="GO:0004590">
    <property type="term" value="F:orotidine-5'-phosphate decarboxylase activity"/>
    <property type="evidence" value="ECO:0007669"/>
    <property type="project" value="UniProtKB-UniRule"/>
</dbReference>
<dbReference type="GO" id="GO:0006207">
    <property type="term" value="P:'de novo' pyrimidine nucleobase biosynthetic process"/>
    <property type="evidence" value="ECO:0007669"/>
    <property type="project" value="InterPro"/>
</dbReference>
<dbReference type="GO" id="GO:0044205">
    <property type="term" value="P:'de novo' UMP biosynthetic process"/>
    <property type="evidence" value="ECO:0007669"/>
    <property type="project" value="UniProtKB-UniRule"/>
</dbReference>
<dbReference type="CDD" id="cd04725">
    <property type="entry name" value="OMP_decarboxylase_like"/>
    <property type="match status" value="1"/>
</dbReference>
<dbReference type="Gene3D" id="3.20.20.70">
    <property type="entry name" value="Aldolase class I"/>
    <property type="match status" value="1"/>
</dbReference>
<dbReference type="HAMAP" id="MF_01200_B">
    <property type="entry name" value="OMPdecase_type1_B"/>
    <property type="match status" value="1"/>
</dbReference>
<dbReference type="InterPro" id="IPR013785">
    <property type="entry name" value="Aldolase_TIM"/>
</dbReference>
<dbReference type="InterPro" id="IPR014732">
    <property type="entry name" value="OMPdecase"/>
</dbReference>
<dbReference type="InterPro" id="IPR018089">
    <property type="entry name" value="OMPdecase_AS"/>
</dbReference>
<dbReference type="InterPro" id="IPR047596">
    <property type="entry name" value="OMPdecase_bac"/>
</dbReference>
<dbReference type="InterPro" id="IPR001754">
    <property type="entry name" value="OMPdeCOase_dom"/>
</dbReference>
<dbReference type="InterPro" id="IPR011060">
    <property type="entry name" value="RibuloseP-bd_barrel"/>
</dbReference>
<dbReference type="NCBIfam" id="NF001273">
    <property type="entry name" value="PRK00230.1"/>
    <property type="match status" value="1"/>
</dbReference>
<dbReference type="NCBIfam" id="TIGR01740">
    <property type="entry name" value="pyrF"/>
    <property type="match status" value="1"/>
</dbReference>
<dbReference type="PANTHER" id="PTHR32119">
    <property type="entry name" value="OROTIDINE 5'-PHOSPHATE DECARBOXYLASE"/>
    <property type="match status" value="1"/>
</dbReference>
<dbReference type="PANTHER" id="PTHR32119:SF2">
    <property type="entry name" value="OROTIDINE 5'-PHOSPHATE DECARBOXYLASE"/>
    <property type="match status" value="1"/>
</dbReference>
<dbReference type="Pfam" id="PF00215">
    <property type="entry name" value="OMPdecase"/>
    <property type="match status" value="1"/>
</dbReference>
<dbReference type="SMART" id="SM00934">
    <property type="entry name" value="OMPdecase"/>
    <property type="match status" value="1"/>
</dbReference>
<dbReference type="SUPFAM" id="SSF51366">
    <property type="entry name" value="Ribulose-phoshate binding barrel"/>
    <property type="match status" value="1"/>
</dbReference>
<dbReference type="PROSITE" id="PS00156">
    <property type="entry name" value="OMPDECASE"/>
    <property type="match status" value="1"/>
</dbReference>
<feature type="chain" id="PRO_0000241918" description="Orotidine 5'-phosphate decarboxylase">
    <location>
        <begin position="1"/>
        <end position="243"/>
    </location>
</feature>
<feature type="active site" description="Proton donor" evidence="1">
    <location>
        <position position="68"/>
    </location>
</feature>
<feature type="binding site" evidence="1">
    <location>
        <position position="18"/>
    </location>
    <ligand>
        <name>substrate</name>
    </ligand>
</feature>
<feature type="binding site" evidence="1">
    <location>
        <position position="39"/>
    </location>
    <ligand>
        <name>substrate</name>
    </ligand>
</feature>
<feature type="binding site" evidence="1">
    <location>
        <begin position="66"/>
        <end position="75"/>
    </location>
    <ligand>
        <name>substrate</name>
    </ligand>
</feature>
<feature type="binding site" evidence="1">
    <location>
        <position position="130"/>
    </location>
    <ligand>
        <name>substrate</name>
    </ligand>
</feature>
<feature type="binding site" evidence="1">
    <location>
        <position position="192"/>
    </location>
    <ligand>
        <name>substrate</name>
    </ligand>
</feature>
<feature type="binding site" evidence="1">
    <location>
        <position position="201"/>
    </location>
    <ligand>
        <name>substrate</name>
    </ligand>
</feature>
<feature type="binding site" evidence="1">
    <location>
        <position position="221"/>
    </location>
    <ligand>
        <name>substrate</name>
    </ligand>
</feature>
<feature type="binding site" evidence="1">
    <location>
        <position position="222"/>
    </location>
    <ligand>
        <name>substrate</name>
    </ligand>
</feature>
<reference key="1">
    <citation type="submission" date="2005-08" db="EMBL/GenBank/DDBJ databases">
        <title>Complete sequence of Synechococcus sp. CC9902.</title>
        <authorList>
            <person name="Copeland A."/>
            <person name="Lucas S."/>
            <person name="Lapidus A."/>
            <person name="Barry K."/>
            <person name="Detter J.C."/>
            <person name="Glavina T."/>
            <person name="Hammon N."/>
            <person name="Israni S."/>
            <person name="Pitluck S."/>
            <person name="Martinez M."/>
            <person name="Schmutz J."/>
            <person name="Larimer F."/>
            <person name="Land M."/>
            <person name="Kyrpides N."/>
            <person name="Ivanova N."/>
            <person name="Richardson P."/>
        </authorList>
    </citation>
    <scope>NUCLEOTIDE SEQUENCE [LARGE SCALE GENOMIC DNA]</scope>
    <source>
        <strain>CC9902</strain>
    </source>
</reference>
<sequence length="243" mass="25277">MALLHSANPADQIIVALDGMAPDQALAFSVQVEGLRWVKVGLELFVQAGPEVVAQLREQDLRVFLDLKFHDIPATMAGACRRAAALGAELITVHACAGSEALNAAQSAAMEGAQSSGQPSPTLLAVTVLTSWEEQRLQRELAISQGIAPRVSALAQLSATAGIGGCVCSPWEAAALRAQHPEPFALITPGIRLKGAAVGDQARVMGPAEAMTAGATQLVIGRPITRANDPSAAFNACCRELRT</sequence>
<evidence type="ECO:0000255" key="1">
    <source>
        <dbReference type="HAMAP-Rule" id="MF_01200"/>
    </source>
</evidence>
<evidence type="ECO:0000305" key="2"/>
<proteinExistence type="inferred from homology"/>